<organism>
    <name type="scientific">Chlorella vulgaris</name>
    <name type="common">Green alga</name>
    <dbReference type="NCBI Taxonomy" id="3077"/>
    <lineage>
        <taxon>Eukaryota</taxon>
        <taxon>Viridiplantae</taxon>
        <taxon>Chlorophyta</taxon>
        <taxon>core chlorophytes</taxon>
        <taxon>Trebouxiophyceae</taxon>
        <taxon>Chlorellales</taxon>
        <taxon>Chlorellaceae</taxon>
        <taxon>Chlorella clade</taxon>
        <taxon>Chlorella</taxon>
    </lineage>
</organism>
<protein>
    <recommendedName>
        <fullName evidence="1">ATP synthase subunit b, chloroplastic</fullName>
    </recommendedName>
    <alternativeName>
        <fullName evidence="1">ATP synthase F(0) sector subunit b</fullName>
    </alternativeName>
    <alternativeName>
        <fullName evidence="1">ATPase subunit I</fullName>
    </alternativeName>
</protein>
<gene>
    <name evidence="1" type="primary">atpF</name>
</gene>
<sequence>MLLSTSFLLAGHFGFNTNLLETNVLNLAVVLAIVLTYVGDALRGLLANRKQSILTNFREADQRATEAQNKLREAQLELEQAQAKAQKIREQANVTIEQEKKQFIRQTQEDIKRLGTLQQETLKFEQQKAQNELAEKLVKLALQQVREKLNQRLTSSIHSAVNNFQIVLFTNSKAS</sequence>
<accession>P56296</accession>
<keyword id="KW-0066">ATP synthesis</keyword>
<keyword id="KW-0067">ATP-binding</keyword>
<keyword id="KW-0138">CF(0)</keyword>
<keyword id="KW-0150">Chloroplast</keyword>
<keyword id="KW-0375">Hydrogen ion transport</keyword>
<keyword id="KW-0406">Ion transport</keyword>
<keyword id="KW-0472">Membrane</keyword>
<keyword id="KW-0547">Nucleotide-binding</keyword>
<keyword id="KW-0934">Plastid</keyword>
<keyword id="KW-0793">Thylakoid</keyword>
<keyword id="KW-0812">Transmembrane</keyword>
<keyword id="KW-1133">Transmembrane helix</keyword>
<keyword id="KW-0813">Transport</keyword>
<comment type="function">
    <text evidence="1">F(1)F(0) ATP synthase produces ATP from ADP in the presence of a proton or sodium gradient. F-type ATPases consist of two structural domains, F(1) containing the extramembraneous catalytic core and F(0) containing the membrane proton channel, linked together by a central stalk and a peripheral stalk. During catalysis, ATP synthesis in the catalytic domain of F(1) is coupled via a rotary mechanism of the central stalk subunits to proton translocation.</text>
</comment>
<comment type="function">
    <text evidence="1">Component of the F(0) channel, it forms part of the peripheral stalk, linking F(1) to F(0).</text>
</comment>
<comment type="subunit">
    <text evidence="1">F-type ATPases have 2 components, F(1) - the catalytic core - and F(0) - the membrane proton channel. F(1) has five subunits: alpha(3), beta(3), gamma(1), delta(1), epsilon(1). F(0) has four main subunits: a(1), b(1), b'(1) and c(10-14). The alpha and beta chains form an alternating ring which encloses part of the gamma chain. F(1) is attached to F(0) by a central stalk formed by the gamma and epsilon chains, while a peripheral stalk is formed by the delta, b and b' chains.</text>
</comment>
<comment type="subcellular location">
    <subcellularLocation>
        <location evidence="1">Plastid</location>
        <location evidence="1">Chloroplast thylakoid membrane</location>
        <topology evidence="1">Single-pass membrane protein</topology>
    </subcellularLocation>
</comment>
<comment type="miscellaneous">
    <text>In plastids the F-type ATPase is also known as CF(1)CF(0).</text>
</comment>
<comment type="similarity">
    <text evidence="1">Belongs to the ATPase B chain family.</text>
</comment>
<dbReference type="EMBL" id="AB001684">
    <property type="protein sequence ID" value="BAA57857.1"/>
    <property type="molecule type" value="Genomic_DNA"/>
</dbReference>
<dbReference type="PIR" id="T07210">
    <property type="entry name" value="T07210"/>
</dbReference>
<dbReference type="RefSeq" id="NP_045782.1">
    <property type="nucleotide sequence ID" value="NC_001865.1"/>
</dbReference>
<dbReference type="SMR" id="P56296"/>
<dbReference type="GeneID" id="809155"/>
<dbReference type="GO" id="GO:0009535">
    <property type="term" value="C:chloroplast thylakoid membrane"/>
    <property type="evidence" value="ECO:0007669"/>
    <property type="project" value="UniProtKB-SubCell"/>
</dbReference>
<dbReference type="GO" id="GO:0045259">
    <property type="term" value="C:proton-transporting ATP synthase complex"/>
    <property type="evidence" value="ECO:0007669"/>
    <property type="project" value="UniProtKB-KW"/>
</dbReference>
<dbReference type="GO" id="GO:0005524">
    <property type="term" value="F:ATP binding"/>
    <property type="evidence" value="ECO:0007669"/>
    <property type="project" value="UniProtKB-KW"/>
</dbReference>
<dbReference type="GO" id="GO:0046933">
    <property type="term" value="F:proton-transporting ATP synthase activity, rotational mechanism"/>
    <property type="evidence" value="ECO:0007669"/>
    <property type="project" value="UniProtKB-UniRule"/>
</dbReference>
<dbReference type="CDD" id="cd06503">
    <property type="entry name" value="ATP-synt_Fo_b"/>
    <property type="match status" value="1"/>
</dbReference>
<dbReference type="HAMAP" id="MF_01398">
    <property type="entry name" value="ATP_synth_b_bprime"/>
    <property type="match status" value="1"/>
</dbReference>
<dbReference type="InterPro" id="IPR002146">
    <property type="entry name" value="ATP_synth_b/b'su_bac/chlpt"/>
</dbReference>
<dbReference type="PANTHER" id="PTHR34264">
    <property type="entry name" value="ATP SYNTHASE SUBUNIT B, CHLOROPLASTIC"/>
    <property type="match status" value="1"/>
</dbReference>
<dbReference type="PANTHER" id="PTHR34264:SF3">
    <property type="entry name" value="ATP SYNTHASE SUBUNIT B, CHLOROPLASTIC"/>
    <property type="match status" value="1"/>
</dbReference>
<dbReference type="Pfam" id="PF00430">
    <property type="entry name" value="ATP-synt_B"/>
    <property type="match status" value="1"/>
</dbReference>
<name>ATPF_CHLVU</name>
<feature type="chain" id="PRO_0000082405" description="ATP synthase subunit b, chloroplastic">
    <location>
        <begin position="1"/>
        <end position="175"/>
    </location>
</feature>
<feature type="transmembrane region" description="Helical" evidence="1">
    <location>
        <begin position="24"/>
        <end position="46"/>
    </location>
</feature>
<evidence type="ECO:0000255" key="1">
    <source>
        <dbReference type="HAMAP-Rule" id="MF_01398"/>
    </source>
</evidence>
<reference key="1">
    <citation type="journal article" date="1997" name="Proc. Natl. Acad. Sci. U.S.A.">
        <title>Complete nucleotide sequence of the chloroplast genome from the green alga Chlorella vulgaris: the existence of genes possibly involved in chloroplast division.</title>
        <authorList>
            <person name="Wakasugi T."/>
            <person name="Nagai T."/>
            <person name="Kapoor M."/>
            <person name="Sugita M."/>
            <person name="Ito M."/>
            <person name="Ito S."/>
            <person name="Tsudzuki J."/>
            <person name="Nakashima K."/>
            <person name="Tsudzuki T."/>
            <person name="Suzuki Y."/>
            <person name="Hamada A."/>
            <person name="Ohta T."/>
            <person name="Inamura A."/>
            <person name="Yoshinaga K."/>
            <person name="Sugiura M."/>
        </authorList>
    </citation>
    <scope>NUCLEOTIDE SEQUENCE [LARGE SCALE GENOMIC DNA]</scope>
    <source>
        <strain>IAM C-27 / Tamiya</strain>
    </source>
</reference>
<proteinExistence type="inferred from homology"/>
<geneLocation type="chloroplast"/>